<gene>
    <name evidence="1" type="primary">ispG</name>
    <name type="synonym">gcpE</name>
    <name type="ordered locus">BPP2855</name>
</gene>
<comment type="function">
    <text evidence="1">Converts 2C-methyl-D-erythritol 2,4-cyclodiphosphate (ME-2,4cPP) into 1-hydroxy-2-methyl-2-(E)-butenyl 4-diphosphate.</text>
</comment>
<comment type="catalytic activity">
    <reaction evidence="1">
        <text>(2E)-4-hydroxy-3-methylbut-2-enyl diphosphate + oxidized [flavodoxin] + H2O + 2 H(+) = 2-C-methyl-D-erythritol 2,4-cyclic diphosphate + reduced [flavodoxin]</text>
        <dbReference type="Rhea" id="RHEA:43604"/>
        <dbReference type="Rhea" id="RHEA-COMP:10622"/>
        <dbReference type="Rhea" id="RHEA-COMP:10623"/>
        <dbReference type="ChEBI" id="CHEBI:15377"/>
        <dbReference type="ChEBI" id="CHEBI:15378"/>
        <dbReference type="ChEBI" id="CHEBI:57618"/>
        <dbReference type="ChEBI" id="CHEBI:58210"/>
        <dbReference type="ChEBI" id="CHEBI:58483"/>
        <dbReference type="ChEBI" id="CHEBI:128753"/>
        <dbReference type="EC" id="1.17.7.3"/>
    </reaction>
</comment>
<comment type="cofactor">
    <cofactor evidence="1">
        <name>[4Fe-4S] cluster</name>
        <dbReference type="ChEBI" id="CHEBI:49883"/>
    </cofactor>
    <text evidence="1">Binds 1 [4Fe-4S] cluster.</text>
</comment>
<comment type="pathway">
    <text evidence="1">Isoprenoid biosynthesis; isopentenyl diphosphate biosynthesis via DXP pathway; isopentenyl diphosphate from 1-deoxy-D-xylulose 5-phosphate: step 5/6.</text>
</comment>
<comment type="similarity">
    <text evidence="1">Belongs to the IspG family.</text>
</comment>
<evidence type="ECO:0000255" key="1">
    <source>
        <dbReference type="HAMAP-Rule" id="MF_00159"/>
    </source>
</evidence>
<evidence type="ECO:0000256" key="2">
    <source>
        <dbReference type="SAM" id="MobiDB-lite"/>
    </source>
</evidence>
<accession>Q7W6P6</accession>
<feature type="chain" id="PRO_0000190543" description="4-hydroxy-3-methylbut-2-en-1-yl diphosphate synthase (flavodoxin)">
    <location>
        <begin position="1"/>
        <end position="433"/>
    </location>
</feature>
<feature type="region of interest" description="Disordered" evidence="2">
    <location>
        <begin position="1"/>
        <end position="24"/>
    </location>
</feature>
<feature type="compositionally biased region" description="Polar residues" evidence="2">
    <location>
        <begin position="1"/>
        <end position="10"/>
    </location>
</feature>
<feature type="binding site" evidence="1">
    <location>
        <position position="320"/>
    </location>
    <ligand>
        <name>[4Fe-4S] cluster</name>
        <dbReference type="ChEBI" id="CHEBI:49883"/>
    </ligand>
</feature>
<feature type="binding site" evidence="1">
    <location>
        <position position="323"/>
    </location>
    <ligand>
        <name>[4Fe-4S] cluster</name>
        <dbReference type="ChEBI" id="CHEBI:49883"/>
    </ligand>
</feature>
<feature type="binding site" evidence="1">
    <location>
        <position position="366"/>
    </location>
    <ligand>
        <name>[4Fe-4S] cluster</name>
        <dbReference type="ChEBI" id="CHEBI:49883"/>
    </ligand>
</feature>
<feature type="binding site" evidence="1">
    <location>
        <position position="373"/>
    </location>
    <ligand>
        <name>[4Fe-4S] cluster</name>
        <dbReference type="ChEBI" id="CHEBI:49883"/>
    </ligand>
</feature>
<keyword id="KW-0004">4Fe-4S</keyword>
<keyword id="KW-0408">Iron</keyword>
<keyword id="KW-0411">Iron-sulfur</keyword>
<keyword id="KW-0414">Isoprene biosynthesis</keyword>
<keyword id="KW-0479">Metal-binding</keyword>
<keyword id="KW-0560">Oxidoreductase</keyword>
<sequence>MRYMQDSSMPCQDASPPDVGAAPRRATRAVRVQWGGRTVTVGGNASVVVQSMTNTDTADAVATAIQVKELAQAGSEIVRITVNTPEAAREVAAIREQLDRMGVEVPLVGDFHYNGHKLLTQFPECAQALSKYRINPGNMGGGKRRDDNFAQMIEVACRHDKPVRIGVNWGSLDHELMARKMDENSRRAQPWEAQAVMRDALVVSAISNARRAEELGLRSDAIVLSCKVSHVQDLIAVYRDLSARCDYPLHLGLTEAGMGSKGIVASTAALAVLLQEGIGDTIRISLTPEPGGDRTREVIVAQEILQTMGLRAFTPMVVACPGCGRTSSTFFQELADSIQSFLRRQMPLWRTRYPGVESMNVAVMGCVVNGPGESRHADIGISLPGTGEVPAAPVFIDGERTVTLKGDHIAEEFQAIVEDYVARRYGAGITHQE</sequence>
<proteinExistence type="inferred from homology"/>
<name>ISPG_BORPA</name>
<organism>
    <name type="scientific">Bordetella parapertussis (strain 12822 / ATCC BAA-587 / NCTC 13253)</name>
    <dbReference type="NCBI Taxonomy" id="257311"/>
    <lineage>
        <taxon>Bacteria</taxon>
        <taxon>Pseudomonadati</taxon>
        <taxon>Pseudomonadota</taxon>
        <taxon>Betaproteobacteria</taxon>
        <taxon>Burkholderiales</taxon>
        <taxon>Alcaligenaceae</taxon>
        <taxon>Bordetella</taxon>
    </lineage>
</organism>
<dbReference type="EC" id="1.17.7.3" evidence="1"/>
<dbReference type="EMBL" id="BX640431">
    <property type="protein sequence ID" value="CAE38147.1"/>
    <property type="molecule type" value="Genomic_DNA"/>
</dbReference>
<dbReference type="RefSeq" id="WP_003810695.1">
    <property type="nucleotide sequence ID" value="NC_002928.3"/>
</dbReference>
<dbReference type="SMR" id="Q7W6P6"/>
<dbReference type="GeneID" id="93204642"/>
<dbReference type="KEGG" id="bpa:BPP2855"/>
<dbReference type="HOGENOM" id="CLU_042258_1_0_4"/>
<dbReference type="UniPathway" id="UPA00056">
    <property type="reaction ID" value="UER00096"/>
</dbReference>
<dbReference type="Proteomes" id="UP000001421">
    <property type="component" value="Chromosome"/>
</dbReference>
<dbReference type="GO" id="GO:0051539">
    <property type="term" value="F:4 iron, 4 sulfur cluster binding"/>
    <property type="evidence" value="ECO:0007669"/>
    <property type="project" value="UniProtKB-UniRule"/>
</dbReference>
<dbReference type="GO" id="GO:0046429">
    <property type="term" value="F:4-hydroxy-3-methylbut-2-en-1-yl diphosphate synthase activity (ferredoxin)"/>
    <property type="evidence" value="ECO:0007669"/>
    <property type="project" value="UniProtKB-UniRule"/>
</dbReference>
<dbReference type="GO" id="GO:0141197">
    <property type="term" value="F:4-hydroxy-3-methylbut-2-enyl-diphosphate synthase activity (flavodoxin)"/>
    <property type="evidence" value="ECO:0007669"/>
    <property type="project" value="UniProtKB-EC"/>
</dbReference>
<dbReference type="GO" id="GO:0005506">
    <property type="term" value="F:iron ion binding"/>
    <property type="evidence" value="ECO:0007669"/>
    <property type="project" value="InterPro"/>
</dbReference>
<dbReference type="GO" id="GO:0019288">
    <property type="term" value="P:isopentenyl diphosphate biosynthetic process, methylerythritol 4-phosphate pathway"/>
    <property type="evidence" value="ECO:0007669"/>
    <property type="project" value="UniProtKB-UniRule"/>
</dbReference>
<dbReference type="GO" id="GO:0016114">
    <property type="term" value="P:terpenoid biosynthetic process"/>
    <property type="evidence" value="ECO:0007669"/>
    <property type="project" value="InterPro"/>
</dbReference>
<dbReference type="FunFam" id="3.30.413.10:FF:000012">
    <property type="entry name" value="4-hydroxy-3-methylbut-2-en-1-yl diphosphate synthase (flavodoxin)"/>
    <property type="match status" value="1"/>
</dbReference>
<dbReference type="Gene3D" id="3.20.20.20">
    <property type="entry name" value="Dihydropteroate synthase-like"/>
    <property type="match status" value="1"/>
</dbReference>
<dbReference type="Gene3D" id="3.30.413.10">
    <property type="entry name" value="Sulfite Reductase Hemoprotein, domain 1"/>
    <property type="match status" value="1"/>
</dbReference>
<dbReference type="HAMAP" id="MF_00159">
    <property type="entry name" value="IspG"/>
    <property type="match status" value="1"/>
</dbReference>
<dbReference type="InterPro" id="IPR011005">
    <property type="entry name" value="Dihydropteroate_synth-like_sf"/>
</dbReference>
<dbReference type="InterPro" id="IPR016425">
    <property type="entry name" value="IspG_bac"/>
</dbReference>
<dbReference type="InterPro" id="IPR004588">
    <property type="entry name" value="IspG_bac-typ"/>
</dbReference>
<dbReference type="InterPro" id="IPR045854">
    <property type="entry name" value="NO2/SO3_Rdtase_4Fe4S_sf"/>
</dbReference>
<dbReference type="NCBIfam" id="TIGR00612">
    <property type="entry name" value="ispG_gcpE"/>
    <property type="match status" value="1"/>
</dbReference>
<dbReference type="NCBIfam" id="NF001540">
    <property type="entry name" value="PRK00366.1"/>
    <property type="match status" value="1"/>
</dbReference>
<dbReference type="PANTHER" id="PTHR30454">
    <property type="entry name" value="4-HYDROXY-3-METHYLBUT-2-EN-1-YL DIPHOSPHATE SYNTHASE"/>
    <property type="match status" value="1"/>
</dbReference>
<dbReference type="PANTHER" id="PTHR30454:SF0">
    <property type="entry name" value="4-HYDROXY-3-METHYLBUT-2-EN-1-YL DIPHOSPHATE SYNTHASE (FERREDOXIN), CHLOROPLASTIC"/>
    <property type="match status" value="1"/>
</dbReference>
<dbReference type="Pfam" id="PF04551">
    <property type="entry name" value="GcpE"/>
    <property type="match status" value="1"/>
</dbReference>
<dbReference type="PIRSF" id="PIRSF004640">
    <property type="entry name" value="IspG"/>
    <property type="match status" value="1"/>
</dbReference>
<dbReference type="SUPFAM" id="SSF56014">
    <property type="entry name" value="Nitrite and sulphite reductase 4Fe-4S domain-like"/>
    <property type="match status" value="1"/>
</dbReference>
<reference key="1">
    <citation type="journal article" date="2003" name="Nat. Genet.">
        <title>Comparative analysis of the genome sequences of Bordetella pertussis, Bordetella parapertussis and Bordetella bronchiseptica.</title>
        <authorList>
            <person name="Parkhill J."/>
            <person name="Sebaihia M."/>
            <person name="Preston A."/>
            <person name="Murphy L.D."/>
            <person name="Thomson N.R."/>
            <person name="Harris D.E."/>
            <person name="Holden M.T.G."/>
            <person name="Churcher C.M."/>
            <person name="Bentley S.D."/>
            <person name="Mungall K.L."/>
            <person name="Cerdeno-Tarraga A.-M."/>
            <person name="Temple L."/>
            <person name="James K.D."/>
            <person name="Harris B."/>
            <person name="Quail M.A."/>
            <person name="Achtman M."/>
            <person name="Atkin R."/>
            <person name="Baker S."/>
            <person name="Basham D."/>
            <person name="Bason N."/>
            <person name="Cherevach I."/>
            <person name="Chillingworth T."/>
            <person name="Collins M."/>
            <person name="Cronin A."/>
            <person name="Davis P."/>
            <person name="Doggett J."/>
            <person name="Feltwell T."/>
            <person name="Goble A."/>
            <person name="Hamlin N."/>
            <person name="Hauser H."/>
            <person name="Holroyd S."/>
            <person name="Jagels K."/>
            <person name="Leather S."/>
            <person name="Moule S."/>
            <person name="Norberczak H."/>
            <person name="O'Neil S."/>
            <person name="Ormond D."/>
            <person name="Price C."/>
            <person name="Rabbinowitsch E."/>
            <person name="Rutter S."/>
            <person name="Sanders M."/>
            <person name="Saunders D."/>
            <person name="Seeger K."/>
            <person name="Sharp S."/>
            <person name="Simmonds M."/>
            <person name="Skelton J."/>
            <person name="Squares R."/>
            <person name="Squares S."/>
            <person name="Stevens K."/>
            <person name="Unwin L."/>
            <person name="Whitehead S."/>
            <person name="Barrell B.G."/>
            <person name="Maskell D.J."/>
        </authorList>
    </citation>
    <scope>NUCLEOTIDE SEQUENCE [LARGE SCALE GENOMIC DNA]</scope>
    <source>
        <strain>12822 / ATCC BAA-587 / NCTC 13253</strain>
    </source>
</reference>
<protein>
    <recommendedName>
        <fullName evidence="1">4-hydroxy-3-methylbut-2-en-1-yl diphosphate synthase (flavodoxin)</fullName>
        <ecNumber evidence="1">1.17.7.3</ecNumber>
    </recommendedName>
    <alternativeName>
        <fullName evidence="1">1-hydroxy-2-methyl-2-(E)-butenyl 4-diphosphate synthase</fullName>
    </alternativeName>
</protein>